<proteinExistence type="inferred from homology"/>
<protein>
    <recommendedName>
        <fullName evidence="6">Magnetosome protein MamS</fullName>
    </recommendedName>
</protein>
<comment type="function">
    <text evidence="9">May play a role in magnetite crystal growth and size.</text>
</comment>
<comment type="subcellular location">
    <subcellularLocation>
        <location evidence="8">Magnetosome membrane</location>
        <topology evidence="1">Single-pass membrane protein</topology>
    </subcellularLocation>
</comment>
<comment type="induction">
    <text evidence="7">Part of the probable 17 gene mamAB operon.</text>
</comment>
<comment type="disruption phenotype">
    <text evidence="2 4">Normal magnetic response, smaller, widely spaced magnetosomes. Near wild-type localization of MamC (PubMed:24816605). Deletion of approximately 80 kb of DNA, including this operon, leads to cells that are non-magnetic, lack internal membrane systems, grow poorly, have reduced mobility and take-up and accumulate iron poorly (PubMed:13129949).</text>
</comment>
<comment type="miscellaneous">
    <text evidence="7">This bacteria makes up to 60 cubo-octahedral magnetosomes of about 45 nm in diameter which contain membrane-bound crystals of magnetite (Fe(3)O(4)).</text>
</comment>
<comment type="miscellaneous">
    <text evidence="3">Expression of just the minimal mamAB gene cluster (MGMSRv2__2365 to MGMSRv2__2381), including this gene, is sufficient to form a minimal magnetosome chain with small magnetite particles.</text>
</comment>
<comment type="similarity">
    <text evidence="6">Belongs to the magnetosome MamS family.</text>
</comment>
<feature type="chain" id="PRO_0000447810" description="Magnetosome protein MamS">
    <location>
        <begin position="1"/>
        <end position="180"/>
    </location>
</feature>
<feature type="topological domain" description="Cytoplasmic" evidence="6">
    <location>
        <begin position="1"/>
        <end position="21"/>
    </location>
</feature>
<feature type="transmembrane region" description="Helical" evidence="1">
    <location>
        <begin position="22"/>
        <end position="42"/>
    </location>
</feature>
<feature type="topological domain" description="Lumenal" evidence="6">
    <location>
        <begin position="43"/>
        <end position="180"/>
    </location>
</feature>
<reference key="1">
    <citation type="journal article" date="2003" name="J. Bacteriol.">
        <title>Characterization of a spontaneous nonmagnetic mutant of Magnetospirillum gryphiswaldense reveals a large deletion comprising a putative magnetosome island.</title>
        <authorList>
            <person name="Schuebbe S."/>
            <person name="Kube M."/>
            <person name="Scheffel A."/>
            <person name="Wawer C."/>
            <person name="Heyen U."/>
            <person name="Meyerdierks A."/>
            <person name="Madkour M.H."/>
            <person name="Mayer F."/>
            <person name="Reinhardt R."/>
            <person name="Schueler D."/>
        </authorList>
    </citation>
    <scope>NUCLEOTIDE SEQUENCE [GENOMIC DNA]</scope>
    <scope>PROBABLE OPERON</scope>
    <scope>DISRUPTION PHENOTYPE</scope>
    <source>
        <strain>DSM 6361 / JCM 21280 / NBRC 15271 / MSR-1</strain>
    </source>
</reference>
<reference key="2">
    <citation type="journal article" date="2005" name="J. Bacteriol.">
        <title>A hypervariable 130-kilobase genomic region of Magnetospirillum gryphiswaldense comprises a magnetosome island which undergoes frequent rearrangements during stationary growth.</title>
        <authorList>
            <person name="Ullrich S."/>
            <person name="Kube M."/>
            <person name="Schuebbe S."/>
            <person name="Reinhardt R."/>
            <person name="Schueler D."/>
        </authorList>
    </citation>
    <scope>NUCLEOTIDE SEQUENCE [GENOMIC DNA]</scope>
    <source>
        <strain>DSM 6361 / JCM 21280 / NBRC 15271 / MSR-1</strain>
    </source>
</reference>
<reference key="3">
    <citation type="journal article" date="2007" name="J. Bacteriol.">
        <title>Comparative genome analysis of four magnetotactic bacteria reveals a complex set of group-specific genes implicated in magnetosome biomineralization and function.</title>
        <authorList>
            <person name="Richter M."/>
            <person name="Kube M."/>
            <person name="Bazylinski D.A."/>
            <person name="Lombardot T."/>
            <person name="Gloeckner F.O."/>
            <person name="Reinhardt R."/>
            <person name="Schueler D."/>
        </authorList>
    </citation>
    <scope>NUCLEOTIDE SEQUENCE [LARGE SCALE GENOMIC DNA]</scope>
    <source>
        <strain>DSM 6361 / JCM 21280 / NBRC 15271 / MSR-1</strain>
    </source>
</reference>
<reference key="4">
    <citation type="journal article" date="2014" name="Genome Announc.">
        <title>Complete genome sequence of Magnetospirillum gryphiswaldense MSR-1.</title>
        <authorList>
            <person name="Wang X."/>
            <person name="Wang Q."/>
            <person name="Zhang W."/>
            <person name="Wang Y."/>
            <person name="Li L."/>
            <person name="Wen T."/>
            <person name="Zhang T."/>
            <person name="Zhang Y."/>
            <person name="Xu J."/>
            <person name="Hu J."/>
            <person name="Li S."/>
            <person name="Liu L."/>
            <person name="Liu J."/>
            <person name="Jiang W."/>
            <person name="Tian J."/>
            <person name="Li Y."/>
            <person name="Schuler D."/>
            <person name="Wang L."/>
            <person name="Li J."/>
        </authorList>
    </citation>
    <scope>NUCLEOTIDE SEQUENCE [LARGE SCALE GENOMIC DNA]</scope>
    <source>
        <strain>DSM 6361 / JCM 21280 / NBRC 15271 / MSR-1</strain>
    </source>
</reference>
<reference key="5">
    <citation type="journal article" date="2004" name="Appl. Environ. Microbiol.">
        <title>Biochemical and proteomic analysis of the magnetosome membrane in Magnetospirillum gryphiswaldense.</title>
        <authorList>
            <person name="Gruenberg K."/>
            <person name="Mueller E.C."/>
            <person name="Otto A."/>
            <person name="Reszka R."/>
            <person name="Linder D."/>
            <person name="Kube M."/>
            <person name="Reinhardt R."/>
            <person name="Schueler D."/>
        </authorList>
    </citation>
    <scope>SUBCELLULAR LOCATION</scope>
    <source>
        <strain>DSM 6361 / JCM 21280 / NBRC 15271 / MSR-1</strain>
    </source>
</reference>
<reference key="6">
    <citation type="journal article" date="2011" name="PLoS ONE">
        <title>Functional analysis of the magnetosome island in Magnetospirillum gryphiswaldense: the mamAB operon is sufficient for magnetite biomineralization.</title>
        <authorList>
            <person name="Lohsse A."/>
            <person name="Ullrich S."/>
            <person name="Katzmann E."/>
            <person name="Borg S."/>
            <person name="Wanner G."/>
            <person name="Richter M."/>
            <person name="Voigt B."/>
            <person name="Schweder T."/>
            <person name="Schueler D."/>
        </authorList>
    </citation>
    <scope>MINIMAL MAGNETOSOME ISLAND</scope>
    <source>
        <strain>DSM 6361 / JCM 21280 / NBRC 15271 / MSR-1</strain>
    </source>
</reference>
<reference key="7">
    <citation type="journal article" date="2014" name="J. Bacteriol.">
        <title>Genetic dissection of the mamAB and mms6 operons reveals a gene set essential for magnetosome biogenesis in Magnetospirillum gryphiswaldense.</title>
        <authorList>
            <person name="Lohsse A."/>
            <person name="Borg S."/>
            <person name="Raschdorf O."/>
            <person name="Kolinko I."/>
            <person name="Tompa E."/>
            <person name="Posfai M."/>
            <person name="Faivre D."/>
            <person name="Baumgartner J."/>
            <person name="Schueler D."/>
        </authorList>
    </citation>
    <scope>FUNCTION</scope>
    <scope>DISRUPTION PHENOTYPE</scope>
    <source>
        <strain>DSM 6361 / JCM 21280 / NBRC 15271 / MSR-1</strain>
    </source>
</reference>
<sequence length="180" mass="18714">MDFRPDQVVARIRGAVEGALTAQSVLGIGGALVLILVVIALLPDRFTRGEGKTATAVSSGAAQALPAALPGLSPFTPAKPLQFSGRVTQVASIGNDVGWGQVHVWIDNGTGALQEISVAPQSYLNQIGCPSFDGARISGIGFLFDAGRPNAELYAKSVLVGGRTCKLRDDEGLALWMTVQ</sequence>
<keyword id="KW-0091">Biomineralization</keyword>
<keyword id="KW-1281">Magnetosome</keyword>
<keyword id="KW-0472">Membrane</keyword>
<keyword id="KW-1185">Reference proteome</keyword>
<keyword id="KW-0812">Transmembrane</keyword>
<keyword id="KW-1133">Transmembrane helix</keyword>
<gene>
    <name evidence="5" type="primary">mamS</name>
    <name type="ordered locus">MGMSRv2__2367</name>
    <name type="ORF">mgI500</name>
    <name type="ORF">MGR_4103</name>
</gene>
<organism>
    <name type="scientific">Magnetospirillum gryphiswaldense (strain DSM 6361 / JCM 21280 / NBRC 15271 / MSR-1)</name>
    <dbReference type="NCBI Taxonomy" id="431944"/>
    <lineage>
        <taxon>Bacteria</taxon>
        <taxon>Pseudomonadati</taxon>
        <taxon>Pseudomonadota</taxon>
        <taxon>Alphaproteobacteria</taxon>
        <taxon>Rhodospirillales</taxon>
        <taxon>Rhodospirillaceae</taxon>
        <taxon>Magnetospirillum</taxon>
    </lineage>
</organism>
<evidence type="ECO:0000255" key="1"/>
<evidence type="ECO:0000269" key="2">
    <source>
    </source>
</evidence>
<evidence type="ECO:0000269" key="3">
    <source>
    </source>
</evidence>
<evidence type="ECO:0000269" key="4">
    <source>
    </source>
</evidence>
<evidence type="ECO:0000303" key="5">
    <source>
    </source>
</evidence>
<evidence type="ECO:0000305" key="6"/>
<evidence type="ECO:0000305" key="7">
    <source>
    </source>
</evidence>
<evidence type="ECO:0000305" key="8">
    <source>
    </source>
</evidence>
<evidence type="ECO:0000305" key="9">
    <source>
    </source>
</evidence>
<dbReference type="EMBL" id="BX571797">
    <property type="protein sequence ID" value="CAE12044.1"/>
    <property type="molecule type" value="Genomic_DNA"/>
</dbReference>
<dbReference type="EMBL" id="AM085146">
    <property type="protein sequence ID" value="CAJ30128.1"/>
    <property type="molecule type" value="Genomic_DNA"/>
</dbReference>
<dbReference type="EMBL" id="CU459003">
    <property type="protein sequence ID" value="CAM78035.1"/>
    <property type="molecule type" value="Genomic_DNA"/>
</dbReference>
<dbReference type="EMBL" id="HG794546">
    <property type="protein sequence ID" value="CDK99582.1"/>
    <property type="molecule type" value="Genomic_DNA"/>
</dbReference>
<dbReference type="SMR" id="Q6NE49"/>
<dbReference type="STRING" id="1430440.MGMSRv2__2367"/>
<dbReference type="KEGG" id="mgry:MSR1_03480"/>
<dbReference type="KEGG" id="mgy:MGMSRv2__2367"/>
<dbReference type="eggNOG" id="ENOG502ZUSW">
    <property type="taxonomic scope" value="Bacteria"/>
</dbReference>
<dbReference type="HOGENOM" id="CLU_1494549_0_0_5"/>
<dbReference type="OrthoDB" id="7349442at2"/>
<dbReference type="Proteomes" id="UP000018922">
    <property type="component" value="Chromosome I"/>
</dbReference>
<dbReference type="GO" id="GO:0110146">
    <property type="term" value="C:magnetosome membrane"/>
    <property type="evidence" value="ECO:0000315"/>
    <property type="project" value="UniProtKB"/>
</dbReference>
<dbReference type="NCBIfam" id="NF040991">
    <property type="entry name" value="MamS"/>
    <property type="match status" value="1"/>
</dbReference>
<name>MAMS_MAGGM</name>
<accession>Q6NE49</accession>
<accession>V6F2G8</accession>